<sequence>MKILRGVSRQMCTSRPEVRVRFAPSPTGFLHLGGLRTALYNFLFSRQRRGVFILRLEDTDQKRLVPGAAEHIEDMLEWAGIPPDESSRRGGDYGPYVQSERLHLYTEAASSLLNTGHAYYCFCSNQRLELLKKEAQRSGHAPRYDNRCRRLQPQQVEQKLAAGVPAVVRFKLHTGTEEFQDLVFGWTGHAVGAVEGDPVILKADGYPTYHLASVVDDHHMRISHVLRGCEWLISSAKHLQLYRALRWTPPTYAHLPLLLNRDGSKLSKRQGDIFLQSFRDRGVLPETLLDLVTHAGSGFSDNRMGRRLDELIRDFNISKITTHSALLDLDKLEEFSRLHLQRRIEDPQQCVWLCEELKQMVKHTHSSEISAAAVLEPEYIERVLQLRKGHISSLQDLLSSTHSYLWVRPRVSQTQLQSESAHAKDIATAVMQMVLAGGSLVSMERLSSELKQISSRTNSTHSSVMKVLRLLLSAQQRGPSVAEMMLSLGEQEVCVRLQKALEL</sequence>
<organism>
    <name type="scientific">Danio rerio</name>
    <name type="common">Zebrafish</name>
    <name type="synonym">Brachydanio rerio</name>
    <dbReference type="NCBI Taxonomy" id="7955"/>
    <lineage>
        <taxon>Eukaryota</taxon>
        <taxon>Metazoa</taxon>
        <taxon>Chordata</taxon>
        <taxon>Craniata</taxon>
        <taxon>Vertebrata</taxon>
        <taxon>Euteleostomi</taxon>
        <taxon>Actinopterygii</taxon>
        <taxon>Neopterygii</taxon>
        <taxon>Teleostei</taxon>
        <taxon>Ostariophysi</taxon>
        <taxon>Cypriniformes</taxon>
        <taxon>Danionidae</taxon>
        <taxon>Danioninae</taxon>
        <taxon>Danio</taxon>
    </lineage>
</organism>
<evidence type="ECO:0000250" key="1"/>
<evidence type="ECO:0000250" key="2">
    <source>
        <dbReference type="UniProtKB" id="Q5JPH6"/>
    </source>
</evidence>
<evidence type="ECO:0000255" key="3"/>
<evidence type="ECO:0000305" key="4"/>
<keyword id="KW-0030">Aminoacyl-tRNA synthetase</keyword>
<keyword id="KW-0067">ATP-binding</keyword>
<keyword id="KW-0436">Ligase</keyword>
<keyword id="KW-0496">Mitochondrion</keyword>
<keyword id="KW-0547">Nucleotide-binding</keyword>
<keyword id="KW-0648">Protein biosynthesis</keyword>
<keyword id="KW-1185">Reference proteome</keyword>
<keyword id="KW-0694">RNA-binding</keyword>
<keyword id="KW-0809">Transit peptide</keyword>
<name>SYEM_DANRE</name>
<reference key="1">
    <citation type="submission" date="2006-08" db="EMBL/GenBank/DDBJ databases">
        <authorList>
            <consortium name="NIH - Zebrafish Gene Collection (ZGC) project"/>
        </authorList>
    </citation>
    <scope>NUCLEOTIDE SEQUENCE [LARGE SCALE MRNA]</scope>
    <source>
        <tissue>Testis</tissue>
    </source>
</reference>
<gene>
    <name evidence="2" type="primary">ears2</name>
    <name type="ORF">zgc:153247</name>
</gene>
<accession>Q0P499</accession>
<comment type="function">
    <text evidence="2">Non-discriminating glutamyl-tRNA synthetase that catalyzes aminoacylation of both mitochondrial tRNA(Glu) and tRNA(Gln) and participates in RNA aminoacylation for mitochondrial protein translation. Attachs glutamate to tRNA(Glu) or tRNA(Gln) in a two-step reaction: glutamate is first activated by ATP to form Glu-AMP and then transferred to the acceptor end of tRNA(Glu) or tRNA(Gln).</text>
</comment>
<comment type="catalytic activity">
    <reaction evidence="2">
        <text>tRNA(Glx) + L-glutamate + ATP = L-glutamyl-tRNA(Glx) + AMP + diphosphate</text>
        <dbReference type="Rhea" id="RHEA:18397"/>
        <dbReference type="Rhea" id="RHEA-COMP:9713"/>
        <dbReference type="Rhea" id="RHEA-COMP:9716"/>
        <dbReference type="ChEBI" id="CHEBI:29985"/>
        <dbReference type="ChEBI" id="CHEBI:30616"/>
        <dbReference type="ChEBI" id="CHEBI:33019"/>
        <dbReference type="ChEBI" id="CHEBI:78442"/>
        <dbReference type="ChEBI" id="CHEBI:78520"/>
        <dbReference type="ChEBI" id="CHEBI:456215"/>
        <dbReference type="EC" id="6.1.1.24"/>
    </reaction>
    <physiologicalReaction direction="left-to-right" evidence="2">
        <dbReference type="Rhea" id="RHEA:18398"/>
    </physiologicalReaction>
</comment>
<comment type="catalytic activity">
    <reaction evidence="2">
        <text>tRNA(Glu) + L-glutamate + ATP = L-glutamyl-tRNA(Glu) + AMP + diphosphate</text>
        <dbReference type="Rhea" id="RHEA:23540"/>
        <dbReference type="Rhea" id="RHEA-COMP:9663"/>
        <dbReference type="Rhea" id="RHEA-COMP:9680"/>
        <dbReference type="ChEBI" id="CHEBI:29985"/>
        <dbReference type="ChEBI" id="CHEBI:30616"/>
        <dbReference type="ChEBI" id="CHEBI:33019"/>
        <dbReference type="ChEBI" id="CHEBI:78442"/>
        <dbReference type="ChEBI" id="CHEBI:78520"/>
        <dbReference type="ChEBI" id="CHEBI:456215"/>
        <dbReference type="EC" id="6.1.1.17"/>
    </reaction>
    <physiologicalReaction direction="left-to-right" evidence="2">
        <dbReference type="Rhea" id="RHEA:23541"/>
    </physiologicalReaction>
</comment>
<comment type="catalytic activity">
    <reaction evidence="2">
        <text>tRNA(Gln) + L-glutamate + ATP = L-glutamyl-tRNA(Gln) + AMP + diphosphate</text>
        <dbReference type="Rhea" id="RHEA:64612"/>
        <dbReference type="Rhea" id="RHEA-COMP:9662"/>
        <dbReference type="Rhea" id="RHEA-COMP:9684"/>
        <dbReference type="ChEBI" id="CHEBI:29985"/>
        <dbReference type="ChEBI" id="CHEBI:30616"/>
        <dbReference type="ChEBI" id="CHEBI:33019"/>
        <dbReference type="ChEBI" id="CHEBI:78442"/>
        <dbReference type="ChEBI" id="CHEBI:78520"/>
        <dbReference type="ChEBI" id="CHEBI:456215"/>
    </reaction>
    <physiologicalReaction direction="left-to-right" evidence="2">
        <dbReference type="Rhea" id="RHEA:64613"/>
    </physiologicalReaction>
</comment>
<comment type="subcellular location">
    <subcellularLocation>
        <location evidence="2">Mitochondrion matrix</location>
    </subcellularLocation>
</comment>
<comment type="similarity">
    <text evidence="4">Belongs to the class-I aminoacyl-tRNA synthetase family. Glutamate--tRNA ligase type 1 subfamily.</text>
</comment>
<protein>
    <recommendedName>
        <fullName evidence="2">Nondiscriminating glutamyl-tRNA synthetase EARS2, mitochondrial</fullName>
        <ecNumber evidence="2">6.1.1.24</ecNumber>
    </recommendedName>
    <alternativeName>
        <fullName>Glutamate--tRNA(Gln) ligase EARS2, mitochondrial</fullName>
        <ecNumber evidence="2">6.1.1.17</ecNumber>
    </alternativeName>
    <alternativeName>
        <fullName>Glutamyl-tRNA synthetase</fullName>
        <shortName>GluRS</shortName>
    </alternativeName>
    <alternativeName>
        <fullName>Mitochondrial glutamyl-tRNA synthetase</fullName>
        <shortName>mtGluRS</shortName>
    </alternativeName>
</protein>
<dbReference type="EC" id="6.1.1.24" evidence="2"/>
<dbReference type="EC" id="6.1.1.17" evidence="2"/>
<dbReference type="EMBL" id="BC122204">
    <property type="protein sequence ID" value="AAI22205.1"/>
    <property type="molecule type" value="mRNA"/>
</dbReference>
<dbReference type="RefSeq" id="NP_001038907.1">
    <property type="nucleotide sequence ID" value="NM_001045442.1"/>
</dbReference>
<dbReference type="SMR" id="Q0P499"/>
<dbReference type="FunCoup" id="Q0P499">
    <property type="interactions" value="1139"/>
</dbReference>
<dbReference type="STRING" id="7955.ENSDARP00000132607"/>
<dbReference type="GeneID" id="751732"/>
<dbReference type="KEGG" id="dre:751732"/>
<dbReference type="AGR" id="ZFIN:ZDB-GENE-060825-214"/>
<dbReference type="CTD" id="124454"/>
<dbReference type="ZFIN" id="ZDB-GENE-060825-214">
    <property type="gene designation" value="ears2"/>
</dbReference>
<dbReference type="InParanoid" id="Q0P499"/>
<dbReference type="OrthoDB" id="428822at2759"/>
<dbReference type="PhylomeDB" id="Q0P499"/>
<dbReference type="PRO" id="PR:Q0P499"/>
<dbReference type="Proteomes" id="UP000000437">
    <property type="component" value="Chromosome 1"/>
</dbReference>
<dbReference type="GO" id="GO:0005759">
    <property type="term" value="C:mitochondrial matrix"/>
    <property type="evidence" value="ECO:0007669"/>
    <property type="project" value="UniProtKB-SubCell"/>
</dbReference>
<dbReference type="GO" id="GO:0005739">
    <property type="term" value="C:mitochondrion"/>
    <property type="evidence" value="ECO:0000318"/>
    <property type="project" value="GO_Central"/>
</dbReference>
<dbReference type="GO" id="GO:0005524">
    <property type="term" value="F:ATP binding"/>
    <property type="evidence" value="ECO:0007669"/>
    <property type="project" value="UniProtKB-KW"/>
</dbReference>
<dbReference type="GO" id="GO:0004818">
    <property type="term" value="F:glutamate-tRNA ligase activity"/>
    <property type="evidence" value="ECO:0000318"/>
    <property type="project" value="GO_Central"/>
</dbReference>
<dbReference type="GO" id="GO:0050561">
    <property type="term" value="F:glutamate-tRNA(Gln) ligase activity"/>
    <property type="evidence" value="ECO:0007669"/>
    <property type="project" value="RHEA"/>
</dbReference>
<dbReference type="GO" id="GO:0000049">
    <property type="term" value="F:tRNA binding"/>
    <property type="evidence" value="ECO:0007669"/>
    <property type="project" value="InterPro"/>
</dbReference>
<dbReference type="GO" id="GO:0008270">
    <property type="term" value="F:zinc ion binding"/>
    <property type="evidence" value="ECO:0007669"/>
    <property type="project" value="InterPro"/>
</dbReference>
<dbReference type="GO" id="GO:0006424">
    <property type="term" value="P:glutamyl-tRNA aminoacylation"/>
    <property type="evidence" value="ECO:0000318"/>
    <property type="project" value="GO_Central"/>
</dbReference>
<dbReference type="CDD" id="cd00808">
    <property type="entry name" value="GluRS_core"/>
    <property type="match status" value="1"/>
</dbReference>
<dbReference type="FunFam" id="3.40.50.620:FF:000045">
    <property type="entry name" value="Glutamate--tRNA ligase, mitochondrial"/>
    <property type="match status" value="1"/>
</dbReference>
<dbReference type="Gene3D" id="1.10.10.350">
    <property type="match status" value="1"/>
</dbReference>
<dbReference type="Gene3D" id="3.40.50.620">
    <property type="entry name" value="HUPs"/>
    <property type="match status" value="1"/>
</dbReference>
<dbReference type="HAMAP" id="MF_00022">
    <property type="entry name" value="Glu_tRNA_synth_type1"/>
    <property type="match status" value="1"/>
</dbReference>
<dbReference type="InterPro" id="IPR045462">
    <property type="entry name" value="aa-tRNA-synth_I_cd-bd"/>
</dbReference>
<dbReference type="InterPro" id="IPR020751">
    <property type="entry name" value="aa-tRNA-synth_I_codon-bd_sub2"/>
</dbReference>
<dbReference type="InterPro" id="IPR001412">
    <property type="entry name" value="aa-tRNA-synth_I_CS"/>
</dbReference>
<dbReference type="InterPro" id="IPR008925">
    <property type="entry name" value="aa_tRNA-synth_I_cd-bd_sf"/>
</dbReference>
<dbReference type="InterPro" id="IPR004527">
    <property type="entry name" value="Glu-tRNA-ligase_bac/mito"/>
</dbReference>
<dbReference type="InterPro" id="IPR000924">
    <property type="entry name" value="Glu/Gln-tRNA-synth"/>
</dbReference>
<dbReference type="InterPro" id="IPR020058">
    <property type="entry name" value="Glu/Gln-tRNA-synth_Ib_cat-dom"/>
</dbReference>
<dbReference type="InterPro" id="IPR049940">
    <property type="entry name" value="GluQ/Sye"/>
</dbReference>
<dbReference type="InterPro" id="IPR033910">
    <property type="entry name" value="GluRS_core"/>
</dbReference>
<dbReference type="InterPro" id="IPR014729">
    <property type="entry name" value="Rossmann-like_a/b/a_fold"/>
</dbReference>
<dbReference type="NCBIfam" id="TIGR00464">
    <property type="entry name" value="gltX_bact"/>
    <property type="match status" value="1"/>
</dbReference>
<dbReference type="PANTHER" id="PTHR43311">
    <property type="entry name" value="GLUTAMATE--TRNA LIGASE"/>
    <property type="match status" value="1"/>
</dbReference>
<dbReference type="PANTHER" id="PTHR43311:SF2">
    <property type="entry name" value="GLUTAMATE--TRNA LIGASE, MITOCHONDRIAL-RELATED"/>
    <property type="match status" value="1"/>
</dbReference>
<dbReference type="Pfam" id="PF19269">
    <property type="entry name" value="Anticodon_2"/>
    <property type="match status" value="1"/>
</dbReference>
<dbReference type="Pfam" id="PF00749">
    <property type="entry name" value="tRNA-synt_1c"/>
    <property type="match status" value="1"/>
</dbReference>
<dbReference type="PRINTS" id="PR00987">
    <property type="entry name" value="TRNASYNTHGLU"/>
</dbReference>
<dbReference type="SUPFAM" id="SSF48163">
    <property type="entry name" value="An anticodon-binding domain of class I aminoacyl-tRNA synthetases"/>
    <property type="match status" value="1"/>
</dbReference>
<dbReference type="SUPFAM" id="SSF52374">
    <property type="entry name" value="Nucleotidylyl transferase"/>
    <property type="match status" value="1"/>
</dbReference>
<dbReference type="PROSITE" id="PS00178">
    <property type="entry name" value="AA_TRNA_LIGASE_I"/>
    <property type="match status" value="1"/>
</dbReference>
<feature type="transit peptide" description="Mitochondrion" evidence="3">
    <location>
        <begin position="1"/>
        <end position="22"/>
    </location>
</feature>
<feature type="chain" id="PRO_0000254564" description="Nondiscriminating glutamyl-tRNA synthetase EARS2, mitochondrial">
    <location>
        <begin position="23"/>
        <end position="503"/>
    </location>
</feature>
<feature type="short sequence motif" description="'HIGH' region">
    <location>
        <begin position="26"/>
        <end position="34"/>
    </location>
</feature>
<feature type="short sequence motif" description="'KMSKS' region">
    <location>
        <begin position="265"/>
        <end position="269"/>
    </location>
</feature>
<feature type="binding site" evidence="1">
    <location>
        <begin position="21"/>
        <end position="23"/>
    </location>
    <ligand>
        <name>L-glutamate</name>
        <dbReference type="ChEBI" id="CHEBI:29985"/>
    </ligand>
</feature>
<feature type="binding site" evidence="1">
    <location>
        <position position="31"/>
    </location>
    <ligand>
        <name>ATP</name>
        <dbReference type="ChEBI" id="CHEBI:30616"/>
    </ligand>
</feature>
<feature type="binding site" evidence="1">
    <location>
        <position position="57"/>
    </location>
    <ligand>
        <name>L-glutamate</name>
        <dbReference type="ChEBI" id="CHEBI:29985"/>
    </ligand>
</feature>
<feature type="binding site" evidence="1">
    <location>
        <begin position="209"/>
        <end position="213"/>
    </location>
    <ligand>
        <name>L-glutamate</name>
        <dbReference type="ChEBI" id="CHEBI:29985"/>
    </ligand>
</feature>
<feature type="binding site" evidence="1">
    <location>
        <position position="227"/>
    </location>
    <ligand>
        <name>L-glutamate</name>
        <dbReference type="ChEBI" id="CHEBI:29985"/>
    </ligand>
</feature>
<feature type="binding site" evidence="1">
    <location>
        <position position="230"/>
    </location>
    <ligand>
        <name>ATP</name>
        <dbReference type="ChEBI" id="CHEBI:30616"/>
    </ligand>
</feature>
<feature type="binding site" evidence="1">
    <location>
        <begin position="265"/>
        <end position="269"/>
    </location>
    <ligand>
        <name>ATP</name>
        <dbReference type="ChEBI" id="CHEBI:30616"/>
    </ligand>
</feature>
<proteinExistence type="evidence at transcript level"/>